<gene>
    <name evidence="1" type="primary">galK</name>
    <name type="ordered locus">YPO1137</name>
    <name type="ordered locus">y3045</name>
    <name type="ordered locus">YP_1022</name>
</gene>
<evidence type="ECO:0000255" key="1">
    <source>
        <dbReference type="HAMAP-Rule" id="MF_00246"/>
    </source>
</evidence>
<feature type="chain" id="PRO_0000184640" description="Galactokinase">
    <location>
        <begin position="1"/>
        <end position="383"/>
    </location>
</feature>
<feature type="active site" description="Proton acceptor" evidence="1">
    <location>
        <position position="174"/>
    </location>
</feature>
<feature type="binding site" evidence="1">
    <location>
        <begin position="34"/>
        <end position="37"/>
    </location>
    <ligand>
        <name>substrate</name>
    </ligand>
</feature>
<feature type="binding site" evidence="1">
    <location>
        <begin position="124"/>
        <end position="130"/>
    </location>
    <ligand>
        <name>ATP</name>
        <dbReference type="ChEBI" id="CHEBI:30616"/>
    </ligand>
</feature>
<feature type="binding site" evidence="1">
    <location>
        <position position="130"/>
    </location>
    <ligand>
        <name>Mg(2+)</name>
        <dbReference type="ChEBI" id="CHEBI:18420"/>
    </ligand>
</feature>
<feature type="binding site" evidence="1">
    <location>
        <position position="162"/>
    </location>
    <ligand>
        <name>Mg(2+)</name>
        <dbReference type="ChEBI" id="CHEBI:18420"/>
    </ligand>
</feature>
<feature type="binding site" evidence="1">
    <location>
        <position position="223"/>
    </location>
    <ligand>
        <name>substrate</name>
    </ligand>
</feature>
<feature type="site" description="Transition state stabilizer" evidence="1">
    <location>
        <position position="28"/>
    </location>
</feature>
<name>GAL1_YERPE</name>
<protein>
    <recommendedName>
        <fullName evidence="1">Galactokinase</fullName>
        <ecNumber evidence="1">2.7.1.6</ecNumber>
    </recommendedName>
    <alternativeName>
        <fullName evidence="1">Galactose kinase</fullName>
    </alternativeName>
</protein>
<proteinExistence type="inferred from homology"/>
<organism>
    <name type="scientific">Yersinia pestis</name>
    <dbReference type="NCBI Taxonomy" id="632"/>
    <lineage>
        <taxon>Bacteria</taxon>
        <taxon>Pseudomonadati</taxon>
        <taxon>Pseudomonadota</taxon>
        <taxon>Gammaproteobacteria</taxon>
        <taxon>Enterobacterales</taxon>
        <taxon>Yersiniaceae</taxon>
        <taxon>Yersinia</taxon>
    </lineage>
</organism>
<sequence length="383" mass="41866">MSLKQHTQTIFRQQFDRESDITIKAPGRVNLIGEHTDYNDGFVLPCAINYETVISCGKRDDRQIRVIAADYENQQDIFSLDAPIVPHPEYRWADYVRGVVKHLQMRNADFGGADLVICGNVPQGAGLSSSASLEVAVGQALQSLYQLPLSGVELALNGQEAENQFVGCNCGIMDQLISALGKKDHALLIDCRTLETRAVPMPENMAVVIINSNIQRGLVDSEYNTRRQQCEAAARFFGVKALRDVEPSLFFSIQDELDPVVAKRARHVISENARTLAAADALAAGNLKLMGQLMQESHISMRDDFEITVPPIDRLVEIVKSVIGDQGGVRMTGGGFGGCIIALMPLELVEQVRTTVAQEYPAHSGGKKETFYVCQASQGAGLC</sequence>
<reference key="1">
    <citation type="journal article" date="2001" name="Nature">
        <title>Genome sequence of Yersinia pestis, the causative agent of plague.</title>
        <authorList>
            <person name="Parkhill J."/>
            <person name="Wren B.W."/>
            <person name="Thomson N.R."/>
            <person name="Titball R.W."/>
            <person name="Holden M.T.G."/>
            <person name="Prentice M.B."/>
            <person name="Sebaihia M."/>
            <person name="James K.D."/>
            <person name="Churcher C.M."/>
            <person name="Mungall K.L."/>
            <person name="Baker S."/>
            <person name="Basham D."/>
            <person name="Bentley S.D."/>
            <person name="Brooks K."/>
            <person name="Cerdeno-Tarraga A.-M."/>
            <person name="Chillingworth T."/>
            <person name="Cronin A."/>
            <person name="Davies R.M."/>
            <person name="Davis P."/>
            <person name="Dougan G."/>
            <person name="Feltwell T."/>
            <person name="Hamlin N."/>
            <person name="Holroyd S."/>
            <person name="Jagels K."/>
            <person name="Karlyshev A.V."/>
            <person name="Leather S."/>
            <person name="Moule S."/>
            <person name="Oyston P.C.F."/>
            <person name="Quail M.A."/>
            <person name="Rutherford K.M."/>
            <person name="Simmonds M."/>
            <person name="Skelton J."/>
            <person name="Stevens K."/>
            <person name="Whitehead S."/>
            <person name="Barrell B.G."/>
        </authorList>
    </citation>
    <scope>NUCLEOTIDE SEQUENCE [LARGE SCALE GENOMIC DNA]</scope>
    <source>
        <strain>CO-92 / Biovar Orientalis</strain>
    </source>
</reference>
<reference key="2">
    <citation type="journal article" date="2002" name="J. Bacteriol.">
        <title>Genome sequence of Yersinia pestis KIM.</title>
        <authorList>
            <person name="Deng W."/>
            <person name="Burland V."/>
            <person name="Plunkett G. III"/>
            <person name="Boutin A."/>
            <person name="Mayhew G.F."/>
            <person name="Liss P."/>
            <person name="Perna N.T."/>
            <person name="Rose D.J."/>
            <person name="Mau B."/>
            <person name="Zhou S."/>
            <person name="Schwartz D.C."/>
            <person name="Fetherston J.D."/>
            <person name="Lindler L.E."/>
            <person name="Brubaker R.R."/>
            <person name="Plano G.V."/>
            <person name="Straley S.C."/>
            <person name="McDonough K.A."/>
            <person name="Nilles M.L."/>
            <person name="Matson J.S."/>
            <person name="Blattner F.R."/>
            <person name="Perry R.D."/>
        </authorList>
    </citation>
    <scope>NUCLEOTIDE SEQUENCE [LARGE SCALE GENOMIC DNA]</scope>
    <source>
        <strain>KIM10+ / Biovar Mediaevalis</strain>
    </source>
</reference>
<reference key="3">
    <citation type="journal article" date="2004" name="DNA Res.">
        <title>Complete genome sequence of Yersinia pestis strain 91001, an isolate avirulent to humans.</title>
        <authorList>
            <person name="Song Y."/>
            <person name="Tong Z."/>
            <person name="Wang J."/>
            <person name="Wang L."/>
            <person name="Guo Z."/>
            <person name="Han Y."/>
            <person name="Zhang J."/>
            <person name="Pei D."/>
            <person name="Zhou D."/>
            <person name="Qin H."/>
            <person name="Pang X."/>
            <person name="Han Y."/>
            <person name="Zhai J."/>
            <person name="Li M."/>
            <person name="Cui B."/>
            <person name="Qi Z."/>
            <person name="Jin L."/>
            <person name="Dai R."/>
            <person name="Chen F."/>
            <person name="Li S."/>
            <person name="Ye C."/>
            <person name="Du Z."/>
            <person name="Lin W."/>
            <person name="Wang J."/>
            <person name="Yu J."/>
            <person name="Yang H."/>
            <person name="Wang J."/>
            <person name="Huang P."/>
            <person name="Yang R."/>
        </authorList>
    </citation>
    <scope>NUCLEOTIDE SEQUENCE [LARGE SCALE GENOMIC DNA]</scope>
    <source>
        <strain>91001 / Biovar Mediaevalis</strain>
    </source>
</reference>
<keyword id="KW-0067">ATP-binding</keyword>
<keyword id="KW-0119">Carbohydrate metabolism</keyword>
<keyword id="KW-0963">Cytoplasm</keyword>
<keyword id="KW-0299">Galactose metabolism</keyword>
<keyword id="KW-0418">Kinase</keyword>
<keyword id="KW-0460">Magnesium</keyword>
<keyword id="KW-0479">Metal-binding</keyword>
<keyword id="KW-0547">Nucleotide-binding</keyword>
<keyword id="KW-1185">Reference proteome</keyword>
<keyword id="KW-0808">Transferase</keyword>
<dbReference type="EC" id="2.7.1.6" evidence="1"/>
<dbReference type="EMBL" id="AL590842">
    <property type="protein sequence ID" value="CAL19802.1"/>
    <property type="molecule type" value="Genomic_DNA"/>
</dbReference>
<dbReference type="EMBL" id="AE009952">
    <property type="protein sequence ID" value="AAM86596.1"/>
    <property type="molecule type" value="Genomic_DNA"/>
</dbReference>
<dbReference type="EMBL" id="AE017042">
    <property type="protein sequence ID" value="AAS61273.1"/>
    <property type="molecule type" value="Genomic_DNA"/>
</dbReference>
<dbReference type="PIR" id="AH0139">
    <property type="entry name" value="AH0139"/>
</dbReference>
<dbReference type="RefSeq" id="WP_002210748.1">
    <property type="nucleotide sequence ID" value="NZ_WUCM01000016.1"/>
</dbReference>
<dbReference type="RefSeq" id="YP_002346177.1">
    <property type="nucleotide sequence ID" value="NC_003143.1"/>
</dbReference>
<dbReference type="SMR" id="Q8ZGY3"/>
<dbReference type="IntAct" id="Q8ZGY3">
    <property type="interactions" value="1"/>
</dbReference>
<dbReference type="STRING" id="214092.YPO1137"/>
<dbReference type="PaxDb" id="214092-YPO1137"/>
<dbReference type="DNASU" id="1147992"/>
<dbReference type="EnsemblBacteria" id="AAS61273">
    <property type="protein sequence ID" value="AAS61273"/>
    <property type="gene ID" value="YP_1022"/>
</dbReference>
<dbReference type="GeneID" id="57977277"/>
<dbReference type="KEGG" id="ype:YPO1137"/>
<dbReference type="KEGG" id="ypk:y3045"/>
<dbReference type="KEGG" id="ypm:YP_1022"/>
<dbReference type="PATRIC" id="fig|214092.21.peg.1432"/>
<dbReference type="eggNOG" id="COG0153">
    <property type="taxonomic scope" value="Bacteria"/>
</dbReference>
<dbReference type="HOGENOM" id="CLU_017814_2_1_6"/>
<dbReference type="OMA" id="VMPCAIN"/>
<dbReference type="OrthoDB" id="250531at2"/>
<dbReference type="UniPathway" id="UPA00214"/>
<dbReference type="Proteomes" id="UP000000815">
    <property type="component" value="Chromosome"/>
</dbReference>
<dbReference type="Proteomes" id="UP000001019">
    <property type="component" value="Chromosome"/>
</dbReference>
<dbReference type="Proteomes" id="UP000002490">
    <property type="component" value="Chromosome"/>
</dbReference>
<dbReference type="GO" id="GO:0005829">
    <property type="term" value="C:cytosol"/>
    <property type="evidence" value="ECO:0000318"/>
    <property type="project" value="GO_Central"/>
</dbReference>
<dbReference type="GO" id="GO:0005524">
    <property type="term" value="F:ATP binding"/>
    <property type="evidence" value="ECO:0007669"/>
    <property type="project" value="UniProtKB-UniRule"/>
</dbReference>
<dbReference type="GO" id="GO:0004335">
    <property type="term" value="F:galactokinase activity"/>
    <property type="evidence" value="ECO:0000318"/>
    <property type="project" value="GO_Central"/>
</dbReference>
<dbReference type="GO" id="GO:0000287">
    <property type="term" value="F:magnesium ion binding"/>
    <property type="evidence" value="ECO:0007669"/>
    <property type="project" value="UniProtKB-UniRule"/>
</dbReference>
<dbReference type="GO" id="GO:0006012">
    <property type="term" value="P:galactose metabolic process"/>
    <property type="evidence" value="ECO:0000318"/>
    <property type="project" value="GO_Central"/>
</dbReference>
<dbReference type="FunFam" id="3.30.230.10:FF:000017">
    <property type="entry name" value="Galactokinase"/>
    <property type="match status" value="1"/>
</dbReference>
<dbReference type="FunFam" id="3.30.70.890:FF:000001">
    <property type="entry name" value="Galactokinase"/>
    <property type="match status" value="1"/>
</dbReference>
<dbReference type="Gene3D" id="3.30.230.10">
    <property type="match status" value="1"/>
</dbReference>
<dbReference type="Gene3D" id="3.30.70.890">
    <property type="entry name" value="GHMP kinase, C-terminal domain"/>
    <property type="match status" value="1"/>
</dbReference>
<dbReference type="HAMAP" id="MF_00246">
    <property type="entry name" value="Galactokinase"/>
    <property type="match status" value="1"/>
</dbReference>
<dbReference type="InterPro" id="IPR000705">
    <property type="entry name" value="Galactokinase"/>
</dbReference>
<dbReference type="InterPro" id="IPR022963">
    <property type="entry name" value="Galactokinase_bac"/>
</dbReference>
<dbReference type="InterPro" id="IPR019741">
    <property type="entry name" value="Galactokinase_CS"/>
</dbReference>
<dbReference type="InterPro" id="IPR019539">
    <property type="entry name" value="GalKase_N"/>
</dbReference>
<dbReference type="InterPro" id="IPR013750">
    <property type="entry name" value="GHMP_kinase_C_dom"/>
</dbReference>
<dbReference type="InterPro" id="IPR036554">
    <property type="entry name" value="GHMP_kinase_C_sf"/>
</dbReference>
<dbReference type="InterPro" id="IPR006204">
    <property type="entry name" value="GHMP_kinase_N_dom"/>
</dbReference>
<dbReference type="InterPro" id="IPR006203">
    <property type="entry name" value="GHMP_knse_ATP-bd_CS"/>
</dbReference>
<dbReference type="InterPro" id="IPR006206">
    <property type="entry name" value="Mevalonate/galactokinase"/>
</dbReference>
<dbReference type="InterPro" id="IPR020568">
    <property type="entry name" value="Ribosomal_Su5_D2-typ_SF"/>
</dbReference>
<dbReference type="InterPro" id="IPR014721">
    <property type="entry name" value="Ribsml_uS5_D2-typ_fold_subgr"/>
</dbReference>
<dbReference type="NCBIfam" id="TIGR00131">
    <property type="entry name" value="gal_kin"/>
    <property type="match status" value="1"/>
</dbReference>
<dbReference type="NCBIfam" id="NF003472">
    <property type="entry name" value="PRK05101.1"/>
    <property type="match status" value="1"/>
</dbReference>
<dbReference type="PANTHER" id="PTHR10457:SF7">
    <property type="entry name" value="GALACTOKINASE-RELATED"/>
    <property type="match status" value="1"/>
</dbReference>
<dbReference type="PANTHER" id="PTHR10457">
    <property type="entry name" value="MEVALONATE KINASE/GALACTOKINASE"/>
    <property type="match status" value="1"/>
</dbReference>
<dbReference type="Pfam" id="PF10509">
    <property type="entry name" value="GalKase_gal_bdg"/>
    <property type="match status" value="1"/>
</dbReference>
<dbReference type="Pfam" id="PF08544">
    <property type="entry name" value="GHMP_kinases_C"/>
    <property type="match status" value="1"/>
</dbReference>
<dbReference type="Pfam" id="PF00288">
    <property type="entry name" value="GHMP_kinases_N"/>
    <property type="match status" value="1"/>
</dbReference>
<dbReference type="PIRSF" id="PIRSF000530">
    <property type="entry name" value="Galactokinase"/>
    <property type="match status" value="1"/>
</dbReference>
<dbReference type="PRINTS" id="PR00473">
    <property type="entry name" value="GALCTOKINASE"/>
</dbReference>
<dbReference type="PRINTS" id="PR00959">
    <property type="entry name" value="MEVGALKINASE"/>
</dbReference>
<dbReference type="SUPFAM" id="SSF55060">
    <property type="entry name" value="GHMP Kinase, C-terminal domain"/>
    <property type="match status" value="1"/>
</dbReference>
<dbReference type="SUPFAM" id="SSF54211">
    <property type="entry name" value="Ribosomal protein S5 domain 2-like"/>
    <property type="match status" value="1"/>
</dbReference>
<dbReference type="PROSITE" id="PS00106">
    <property type="entry name" value="GALACTOKINASE"/>
    <property type="match status" value="1"/>
</dbReference>
<dbReference type="PROSITE" id="PS00627">
    <property type="entry name" value="GHMP_KINASES_ATP"/>
    <property type="match status" value="1"/>
</dbReference>
<accession>Q8ZGY3</accession>
<accession>Q0WHR1</accession>
<comment type="function">
    <text evidence="1">Catalyzes the transfer of the gamma-phosphate of ATP to D-galactose to form alpha-D-galactose-1-phosphate (Gal-1-P).</text>
</comment>
<comment type="catalytic activity">
    <reaction evidence="1">
        <text>alpha-D-galactose + ATP = alpha-D-galactose 1-phosphate + ADP + H(+)</text>
        <dbReference type="Rhea" id="RHEA:13553"/>
        <dbReference type="ChEBI" id="CHEBI:15378"/>
        <dbReference type="ChEBI" id="CHEBI:28061"/>
        <dbReference type="ChEBI" id="CHEBI:30616"/>
        <dbReference type="ChEBI" id="CHEBI:58336"/>
        <dbReference type="ChEBI" id="CHEBI:456216"/>
        <dbReference type="EC" id="2.7.1.6"/>
    </reaction>
</comment>
<comment type="pathway">
    <text evidence="1">Carbohydrate metabolism; galactose metabolism.</text>
</comment>
<comment type="subcellular location">
    <subcellularLocation>
        <location evidence="1">Cytoplasm</location>
    </subcellularLocation>
</comment>
<comment type="similarity">
    <text evidence="1">Belongs to the GHMP kinase family. GalK subfamily.</text>
</comment>